<keyword id="KW-0963">Cytoplasm</keyword>
<keyword id="KW-0396">Initiation factor</keyword>
<keyword id="KW-0539">Nucleus</keyword>
<keyword id="KW-0597">Phosphoprotein</keyword>
<keyword id="KW-0648">Protein biosynthesis</keyword>
<keyword id="KW-1185">Reference proteome</keyword>
<keyword id="KW-0694">RNA-binding</keyword>
<protein>
    <recommendedName>
        <fullName evidence="2">Eukaryotic translation initiation factor 3 subunit G</fullName>
        <shortName evidence="2">eIF3g</shortName>
    </recommendedName>
    <alternativeName>
        <fullName evidence="2">Eukaryotic translation initiation factor 3 RNA-binding subunit</fullName>
        <shortName evidence="2">eIF-3 RNA-binding subunit</shortName>
    </alternativeName>
    <alternativeName>
        <fullName evidence="2">Eukaryotic translation initiation factor 3 subunit 4</fullName>
    </alternativeName>
    <alternativeName>
        <fullName evidence="2">eIF-3-delta</fullName>
    </alternativeName>
    <alternativeName>
        <fullName evidence="2">eIF3 p42</fullName>
    </alternativeName>
    <alternativeName>
        <fullName evidence="2">eIF3 p44</fullName>
    </alternativeName>
</protein>
<sequence>MPTGDFDSKPSWADQVEEEGEDDKCVTSELLKGIPLPTGDTSPEPELLPGDPLPPPKEVINGNIKTVTEYKVEEDGKKFKIVRTFRIETRKASKAVARRKNWKKFGNSEFDPPGPNVATTTVSDDVSMTFITSKEDLNCQEEEDPMNKLKGQKIVSCRICKGDHWTTRCPYKDTLGPMQKELAEQLGLSTGEKEKLPGELEPVQAAQNKTGKYVPPSLRDGASRRGESMQPNRRADDNATIRVTNLSEDTRETDLQELFRPFGSISRIYLAKDKTTGQSKGFAFISFHRREDAARAIAGVSGFGYDHLILNVEWAKPSTN</sequence>
<proteinExistence type="evidence at protein level"/>
<comment type="function">
    <text evidence="2">RNA-binding component of the eukaryotic translation initiation factor 3 (eIF-3) complex, which is required for several steps in the initiation of protein synthesis. The eIF-3 complex associates with the 40S ribosome and facilitates the recruitment of eIF-1, eIF-1A, eIF-2:GTP:methionyl-tRNAi and eIF-5 to form the 43S pre-initiation complex (43S PIC). The eIF-3 complex stimulates mRNA recruitment to the 43S PIC and scanning of the mRNA for AUG recognition. The eIF-3 complex is also required for disassembly and recycling of post-termination ribosomal complexes and subsequently prevents premature joining of the 40S and 60S ribosomal subunits prior to initiation. The eIF-3 complex specifically targets and initiates translation of a subset of mRNAs involved in cell proliferation, including cell cycling, differentiation and apoptosis, and uses different modes of RNA stem-loop binding to exert either translational activation or repression. This subunit can bind 18S rRNA.</text>
</comment>
<comment type="subunit">
    <text evidence="1 2">Component of the eukaryotic translation initiation factor 3 (eIF-3) complex, which is composed of 13 subunits: EIF3A, EIF3B, EIF3C, EIF3D, EIF3E, EIF3F, EIF3G, EIF3H, EIF3I, EIF3J, EIF3K, EIF3L and EIF3M. The eIF-3 complex appears to include 3 stable modules: module A is composed of EIF3A, EIF3B, EIF3G and EIF3I; module B is composed of EIF3F, EIF3H, and EIF3M; and module C is composed of EIF3C, EIF3D, EIF3E, EIF3K and EIF3L. EIF3C of module C binds EIF3B of module A and EIF3H of module B, thereby linking the three modules. EIF3J is a labile subunit that binds to the eIF-3 complex via EIF3B. The eIF-3 complex interacts with RPS6KB1 under conditions of nutrient depletion. Mitogenic stimulation leads to binding and activation of a complex composed of MTOR and RPTOR, leading to phosphorylation and release of RPS6KB1 and binding of EIF4B to eIF-3. Interacts (via C-terminus) with AIFM1 (via N-terminus) (By similarity). Interacts with DHX33; the interaction is independent of RNA (By similarity).</text>
</comment>
<comment type="subcellular location">
    <subcellularLocation>
        <location evidence="2">Cytoplasm</location>
    </subcellularLocation>
    <subcellularLocation>
        <location evidence="2">Nucleus</location>
    </subcellularLocation>
    <subcellularLocation>
        <location evidence="2">Cytoplasm</location>
        <location evidence="2">Perinuclear region</location>
    </subcellularLocation>
    <text evidence="2">Colocalizes with AIFM1 in the nucleus and perinuclear region.</text>
</comment>
<comment type="PTM">
    <text evidence="2">Phosphorylated. Phosphorylation is enhanced upon serum stimulation.</text>
</comment>
<comment type="similarity">
    <text evidence="2">Belongs to the eIF-3 subunit G family.</text>
</comment>
<feature type="chain" id="PRO_0000365396" description="Eukaryotic translation initiation factor 3 subunit G">
    <location>
        <begin position="1"/>
        <end position="320"/>
    </location>
</feature>
<feature type="domain" description="RRM" evidence="2">
    <location>
        <begin position="239"/>
        <end position="317"/>
    </location>
</feature>
<feature type="region of interest" description="Disordered" evidence="3">
    <location>
        <begin position="1"/>
        <end position="60"/>
    </location>
</feature>
<feature type="region of interest" description="Disordered" evidence="3">
    <location>
        <begin position="205"/>
        <end position="233"/>
    </location>
</feature>
<feature type="compositionally biased region" description="Basic and acidic residues" evidence="3">
    <location>
        <begin position="221"/>
        <end position="233"/>
    </location>
</feature>
<feature type="modified residue" description="Phosphoserine" evidence="1">
    <location>
        <position position="8"/>
    </location>
</feature>
<feature type="modified residue" description="Phosphoserine" evidence="1">
    <location>
        <position position="11"/>
    </location>
</feature>
<feature type="modified residue" description="Phosphothreonine" evidence="1 2">
    <location>
        <position position="38"/>
    </location>
</feature>
<feature type="modified residue" description="Phosphothreonine" evidence="4">
    <location>
        <position position="41"/>
    </location>
</feature>
<feature type="modified residue" description="Phosphoserine" evidence="4">
    <location>
        <position position="42"/>
    </location>
</feature>
<feature type="modified residue" description="Phosphoserine" evidence="1">
    <location>
        <position position="189"/>
    </location>
</feature>
<feature type="modified residue" description="Phosphoserine" evidence="1">
    <location>
        <position position="223"/>
    </location>
</feature>
<feature type="modified residue" description="Phosphoserine" evidence="1">
    <location>
        <position position="264"/>
    </location>
</feature>
<reference key="1">
    <citation type="submission" date="2005-09" db="EMBL/GenBank/DDBJ databases">
        <authorList>
            <person name="Mural R.J."/>
            <person name="Adams M.D."/>
            <person name="Myers E.W."/>
            <person name="Smith H.O."/>
            <person name="Venter J.C."/>
        </authorList>
    </citation>
    <scope>NUCLEOTIDE SEQUENCE [LARGE SCALE GENOMIC DNA]</scope>
</reference>
<reference key="2">
    <citation type="journal article" date="2004" name="Genome Res.">
        <title>The status, quality, and expansion of the NIH full-length cDNA project: the Mammalian Gene Collection (MGC).</title>
        <authorList>
            <consortium name="The MGC Project Team"/>
        </authorList>
    </citation>
    <scope>NUCLEOTIDE SEQUENCE [LARGE SCALE MRNA]</scope>
    <source>
        <tissue>Ovary</tissue>
    </source>
</reference>
<reference key="3">
    <citation type="journal article" date="2012" name="Nat. Commun.">
        <title>Quantitative maps of protein phosphorylation sites across 14 different rat organs and tissues.</title>
        <authorList>
            <person name="Lundby A."/>
            <person name="Secher A."/>
            <person name="Lage K."/>
            <person name="Nordsborg N.B."/>
            <person name="Dmytriyev A."/>
            <person name="Lundby C."/>
            <person name="Olsen J.V."/>
        </authorList>
    </citation>
    <scope>PHOSPHORYLATION [LARGE SCALE ANALYSIS] AT THR-41 AND SER-42</scope>
    <scope>IDENTIFICATION BY MASS SPECTROMETRY [LARGE SCALE ANALYSIS]</scope>
</reference>
<dbReference type="EMBL" id="CH473993">
    <property type="protein sequence ID" value="EDL78343.1"/>
    <property type="molecule type" value="Genomic_DNA"/>
</dbReference>
<dbReference type="EMBL" id="BC086383">
    <property type="protein sequence ID" value="AAH86383.1"/>
    <property type="molecule type" value="mRNA"/>
</dbReference>
<dbReference type="RefSeq" id="NP_001013113.1">
    <property type="nucleotide sequence ID" value="NM_001013095.1"/>
</dbReference>
<dbReference type="BMRB" id="Q5RK09"/>
<dbReference type="SMR" id="Q5RK09"/>
<dbReference type="FunCoup" id="Q5RK09">
    <property type="interactions" value="3353"/>
</dbReference>
<dbReference type="IntAct" id="Q5RK09">
    <property type="interactions" value="2"/>
</dbReference>
<dbReference type="STRING" id="10116.ENSRNOP00000027986"/>
<dbReference type="iPTMnet" id="Q5RK09"/>
<dbReference type="PhosphoSitePlus" id="Q5RK09"/>
<dbReference type="jPOST" id="Q5RK09"/>
<dbReference type="PaxDb" id="10116-ENSRNOP00000027986"/>
<dbReference type="GeneID" id="298700"/>
<dbReference type="KEGG" id="rno:298700"/>
<dbReference type="UCSC" id="RGD:1307191">
    <property type="organism name" value="rat"/>
</dbReference>
<dbReference type="AGR" id="RGD:1307191"/>
<dbReference type="CTD" id="8666"/>
<dbReference type="RGD" id="1307191">
    <property type="gene designation" value="Eif3g"/>
</dbReference>
<dbReference type="VEuPathDB" id="HostDB:ENSRNOG00000020619"/>
<dbReference type="eggNOG" id="KOG0122">
    <property type="taxonomic scope" value="Eukaryota"/>
</dbReference>
<dbReference type="HOGENOM" id="CLU_034595_0_0_1"/>
<dbReference type="InParanoid" id="Q5RK09"/>
<dbReference type="OrthoDB" id="20312at9989"/>
<dbReference type="PhylomeDB" id="Q5RK09"/>
<dbReference type="Reactome" id="R-RNO-156827">
    <property type="pathway name" value="L13a-mediated translational silencing of Ceruloplasmin expression"/>
</dbReference>
<dbReference type="Reactome" id="R-RNO-72649">
    <property type="pathway name" value="Translation initiation complex formation"/>
</dbReference>
<dbReference type="Reactome" id="R-RNO-72689">
    <property type="pathway name" value="Formation of a pool of free 40S subunits"/>
</dbReference>
<dbReference type="Reactome" id="R-RNO-72695">
    <property type="pathway name" value="Formation of the ternary complex, and subsequently, the 43S complex"/>
</dbReference>
<dbReference type="Reactome" id="R-RNO-72702">
    <property type="pathway name" value="Ribosomal scanning and start codon recognition"/>
</dbReference>
<dbReference type="PRO" id="PR:Q5RK09"/>
<dbReference type="Proteomes" id="UP000002494">
    <property type="component" value="Chromosome 8"/>
</dbReference>
<dbReference type="Proteomes" id="UP000234681">
    <property type="component" value="Chromosome 8"/>
</dbReference>
<dbReference type="Bgee" id="ENSRNOG00000020619">
    <property type="expression patterns" value="Expressed in spleen and 20 other cell types or tissues"/>
</dbReference>
<dbReference type="GO" id="GO:0005737">
    <property type="term" value="C:cytoplasm"/>
    <property type="evidence" value="ECO:0000266"/>
    <property type="project" value="RGD"/>
</dbReference>
<dbReference type="GO" id="GO:0016282">
    <property type="term" value="C:eukaryotic 43S preinitiation complex"/>
    <property type="evidence" value="ECO:0007669"/>
    <property type="project" value="UniProtKB-UniRule"/>
</dbReference>
<dbReference type="GO" id="GO:0033290">
    <property type="term" value="C:eukaryotic 48S preinitiation complex"/>
    <property type="evidence" value="ECO:0007669"/>
    <property type="project" value="UniProtKB-UniRule"/>
</dbReference>
<dbReference type="GO" id="GO:0005852">
    <property type="term" value="C:eukaryotic translation initiation factor 3 complex"/>
    <property type="evidence" value="ECO:0000250"/>
    <property type="project" value="UniProtKB"/>
</dbReference>
<dbReference type="GO" id="GO:0048471">
    <property type="term" value="C:perinuclear region of cytoplasm"/>
    <property type="evidence" value="ECO:0007669"/>
    <property type="project" value="UniProtKB-SubCell"/>
</dbReference>
<dbReference type="GO" id="GO:0003723">
    <property type="term" value="F:RNA binding"/>
    <property type="evidence" value="ECO:0000266"/>
    <property type="project" value="RGD"/>
</dbReference>
<dbReference type="GO" id="GO:0003743">
    <property type="term" value="F:translation initiation factor activity"/>
    <property type="evidence" value="ECO:0007669"/>
    <property type="project" value="UniProtKB-UniRule"/>
</dbReference>
<dbReference type="GO" id="GO:0001732">
    <property type="term" value="P:formation of cytoplasmic translation initiation complex"/>
    <property type="evidence" value="ECO:0007669"/>
    <property type="project" value="UniProtKB-UniRule"/>
</dbReference>
<dbReference type="GO" id="GO:0006413">
    <property type="term" value="P:translational initiation"/>
    <property type="evidence" value="ECO:0000250"/>
    <property type="project" value="UniProtKB"/>
</dbReference>
<dbReference type="GO" id="GO:0075525">
    <property type="term" value="P:viral translational termination-reinitiation"/>
    <property type="evidence" value="ECO:0000266"/>
    <property type="project" value="RGD"/>
</dbReference>
<dbReference type="CDD" id="cd12933">
    <property type="entry name" value="eIF3G"/>
    <property type="match status" value="1"/>
</dbReference>
<dbReference type="CDD" id="cd12408">
    <property type="entry name" value="RRM_eIF3G_like"/>
    <property type="match status" value="1"/>
</dbReference>
<dbReference type="FunFam" id="3.30.70.330:FF:000194">
    <property type="entry name" value="Eukaryotic translation initiation factor 3 subunit G"/>
    <property type="match status" value="1"/>
</dbReference>
<dbReference type="Gene3D" id="3.30.70.330">
    <property type="match status" value="1"/>
</dbReference>
<dbReference type="HAMAP" id="MF_03006">
    <property type="entry name" value="eIF3g"/>
    <property type="match status" value="1"/>
</dbReference>
<dbReference type="InterPro" id="IPR017334">
    <property type="entry name" value="eIF3_g"/>
</dbReference>
<dbReference type="InterPro" id="IPR024675">
    <property type="entry name" value="eIF3g_N"/>
</dbReference>
<dbReference type="InterPro" id="IPR034240">
    <property type="entry name" value="eIF3G_RRM"/>
</dbReference>
<dbReference type="InterPro" id="IPR012677">
    <property type="entry name" value="Nucleotide-bd_a/b_plait_sf"/>
</dbReference>
<dbReference type="InterPro" id="IPR035979">
    <property type="entry name" value="RBD_domain_sf"/>
</dbReference>
<dbReference type="InterPro" id="IPR000504">
    <property type="entry name" value="RRM_dom"/>
</dbReference>
<dbReference type="PANTHER" id="PTHR10352">
    <property type="entry name" value="EUKARYOTIC TRANSLATION INITIATION FACTOR 3 SUBUNIT G"/>
    <property type="match status" value="1"/>
</dbReference>
<dbReference type="Pfam" id="PF12353">
    <property type="entry name" value="eIF3g"/>
    <property type="match status" value="1"/>
</dbReference>
<dbReference type="Pfam" id="PF00076">
    <property type="entry name" value="RRM_1"/>
    <property type="match status" value="1"/>
</dbReference>
<dbReference type="PIRSF" id="PIRSF037949">
    <property type="entry name" value="Transl_init_eIF-3_RNA-bind"/>
    <property type="match status" value="1"/>
</dbReference>
<dbReference type="SMART" id="SM00360">
    <property type="entry name" value="RRM"/>
    <property type="match status" value="1"/>
</dbReference>
<dbReference type="SUPFAM" id="SSF54928">
    <property type="entry name" value="RNA-binding domain, RBD"/>
    <property type="match status" value="1"/>
</dbReference>
<dbReference type="PROSITE" id="PS50102">
    <property type="entry name" value="RRM"/>
    <property type="match status" value="1"/>
</dbReference>
<organism>
    <name type="scientific">Rattus norvegicus</name>
    <name type="common">Rat</name>
    <dbReference type="NCBI Taxonomy" id="10116"/>
    <lineage>
        <taxon>Eukaryota</taxon>
        <taxon>Metazoa</taxon>
        <taxon>Chordata</taxon>
        <taxon>Craniata</taxon>
        <taxon>Vertebrata</taxon>
        <taxon>Euteleostomi</taxon>
        <taxon>Mammalia</taxon>
        <taxon>Eutheria</taxon>
        <taxon>Euarchontoglires</taxon>
        <taxon>Glires</taxon>
        <taxon>Rodentia</taxon>
        <taxon>Myomorpha</taxon>
        <taxon>Muroidea</taxon>
        <taxon>Muridae</taxon>
        <taxon>Murinae</taxon>
        <taxon>Rattus</taxon>
    </lineage>
</organism>
<name>EIF3G_RAT</name>
<accession>Q5RK09</accession>
<evidence type="ECO:0000250" key="1">
    <source>
        <dbReference type="UniProtKB" id="O75821"/>
    </source>
</evidence>
<evidence type="ECO:0000255" key="2">
    <source>
        <dbReference type="HAMAP-Rule" id="MF_03006"/>
    </source>
</evidence>
<evidence type="ECO:0000256" key="3">
    <source>
        <dbReference type="SAM" id="MobiDB-lite"/>
    </source>
</evidence>
<evidence type="ECO:0007744" key="4">
    <source>
    </source>
</evidence>
<gene>
    <name type="primary">Eif3g</name>
    <name type="synonym">Eif3s4</name>
</gene>